<gene>
    <name evidence="1" type="primary">fusA</name>
    <name type="ordered locus">SynWH7803_0380</name>
</gene>
<evidence type="ECO:0000255" key="1">
    <source>
        <dbReference type="HAMAP-Rule" id="MF_00054"/>
    </source>
</evidence>
<feature type="chain" id="PRO_1000008894" description="Elongation factor G">
    <location>
        <begin position="1"/>
        <end position="691"/>
    </location>
</feature>
<feature type="domain" description="tr-type G">
    <location>
        <begin position="8"/>
        <end position="282"/>
    </location>
</feature>
<feature type="binding site" evidence="1">
    <location>
        <begin position="17"/>
        <end position="24"/>
    </location>
    <ligand>
        <name>GTP</name>
        <dbReference type="ChEBI" id="CHEBI:37565"/>
    </ligand>
</feature>
<feature type="binding site" evidence="1">
    <location>
        <begin position="81"/>
        <end position="85"/>
    </location>
    <ligand>
        <name>GTP</name>
        <dbReference type="ChEBI" id="CHEBI:37565"/>
    </ligand>
</feature>
<feature type="binding site" evidence="1">
    <location>
        <begin position="135"/>
        <end position="138"/>
    </location>
    <ligand>
        <name>GTP</name>
        <dbReference type="ChEBI" id="CHEBI:37565"/>
    </ligand>
</feature>
<dbReference type="EMBL" id="CT971583">
    <property type="protein sequence ID" value="CAK22806.1"/>
    <property type="molecule type" value="Genomic_DNA"/>
</dbReference>
<dbReference type="SMR" id="A5GIP1"/>
<dbReference type="STRING" id="32051.SynWH7803_0380"/>
<dbReference type="KEGG" id="syx:SynWH7803_0380"/>
<dbReference type="eggNOG" id="COG0480">
    <property type="taxonomic scope" value="Bacteria"/>
</dbReference>
<dbReference type="HOGENOM" id="CLU_002794_4_1_3"/>
<dbReference type="OrthoDB" id="580826at2"/>
<dbReference type="Proteomes" id="UP000001566">
    <property type="component" value="Chromosome"/>
</dbReference>
<dbReference type="GO" id="GO:0005737">
    <property type="term" value="C:cytoplasm"/>
    <property type="evidence" value="ECO:0007669"/>
    <property type="project" value="UniProtKB-SubCell"/>
</dbReference>
<dbReference type="GO" id="GO:0005525">
    <property type="term" value="F:GTP binding"/>
    <property type="evidence" value="ECO:0007669"/>
    <property type="project" value="UniProtKB-UniRule"/>
</dbReference>
<dbReference type="GO" id="GO:0003924">
    <property type="term" value="F:GTPase activity"/>
    <property type="evidence" value="ECO:0007669"/>
    <property type="project" value="InterPro"/>
</dbReference>
<dbReference type="GO" id="GO:0003746">
    <property type="term" value="F:translation elongation factor activity"/>
    <property type="evidence" value="ECO:0007669"/>
    <property type="project" value="UniProtKB-UniRule"/>
</dbReference>
<dbReference type="GO" id="GO:0032790">
    <property type="term" value="P:ribosome disassembly"/>
    <property type="evidence" value="ECO:0007669"/>
    <property type="project" value="TreeGrafter"/>
</dbReference>
<dbReference type="CDD" id="cd01886">
    <property type="entry name" value="EF-G"/>
    <property type="match status" value="1"/>
</dbReference>
<dbReference type="CDD" id="cd16262">
    <property type="entry name" value="EFG_III"/>
    <property type="match status" value="1"/>
</dbReference>
<dbReference type="CDD" id="cd01434">
    <property type="entry name" value="EFG_mtEFG1_IV"/>
    <property type="match status" value="1"/>
</dbReference>
<dbReference type="CDD" id="cd03713">
    <property type="entry name" value="EFG_mtEFG_C"/>
    <property type="match status" value="1"/>
</dbReference>
<dbReference type="CDD" id="cd04088">
    <property type="entry name" value="EFG_mtEFG_II"/>
    <property type="match status" value="1"/>
</dbReference>
<dbReference type="FunFam" id="2.40.30.10:FF:000006">
    <property type="entry name" value="Elongation factor G"/>
    <property type="match status" value="1"/>
</dbReference>
<dbReference type="FunFam" id="3.30.230.10:FF:000003">
    <property type="entry name" value="Elongation factor G"/>
    <property type="match status" value="1"/>
</dbReference>
<dbReference type="FunFam" id="3.30.70.240:FF:000001">
    <property type="entry name" value="Elongation factor G"/>
    <property type="match status" value="1"/>
</dbReference>
<dbReference type="FunFam" id="3.30.70.870:FF:000001">
    <property type="entry name" value="Elongation factor G"/>
    <property type="match status" value="1"/>
</dbReference>
<dbReference type="FunFam" id="3.40.50.300:FF:000029">
    <property type="entry name" value="Elongation factor G"/>
    <property type="match status" value="1"/>
</dbReference>
<dbReference type="Gene3D" id="3.30.230.10">
    <property type="match status" value="1"/>
</dbReference>
<dbReference type="Gene3D" id="3.30.70.240">
    <property type="match status" value="1"/>
</dbReference>
<dbReference type="Gene3D" id="3.30.70.870">
    <property type="entry name" value="Elongation Factor G (Translational Gtpase), domain 3"/>
    <property type="match status" value="1"/>
</dbReference>
<dbReference type="Gene3D" id="3.40.50.300">
    <property type="entry name" value="P-loop containing nucleotide triphosphate hydrolases"/>
    <property type="match status" value="1"/>
</dbReference>
<dbReference type="Gene3D" id="2.40.30.10">
    <property type="entry name" value="Translation factors"/>
    <property type="match status" value="1"/>
</dbReference>
<dbReference type="HAMAP" id="MF_00054_B">
    <property type="entry name" value="EF_G_EF_2_B"/>
    <property type="match status" value="1"/>
</dbReference>
<dbReference type="InterPro" id="IPR041095">
    <property type="entry name" value="EFG_II"/>
</dbReference>
<dbReference type="InterPro" id="IPR009022">
    <property type="entry name" value="EFG_III"/>
</dbReference>
<dbReference type="InterPro" id="IPR035647">
    <property type="entry name" value="EFG_III/V"/>
</dbReference>
<dbReference type="InterPro" id="IPR047872">
    <property type="entry name" value="EFG_IV"/>
</dbReference>
<dbReference type="InterPro" id="IPR035649">
    <property type="entry name" value="EFG_V"/>
</dbReference>
<dbReference type="InterPro" id="IPR000640">
    <property type="entry name" value="EFG_V-like"/>
</dbReference>
<dbReference type="InterPro" id="IPR004161">
    <property type="entry name" value="EFTu-like_2"/>
</dbReference>
<dbReference type="InterPro" id="IPR031157">
    <property type="entry name" value="G_TR_CS"/>
</dbReference>
<dbReference type="InterPro" id="IPR027417">
    <property type="entry name" value="P-loop_NTPase"/>
</dbReference>
<dbReference type="InterPro" id="IPR020568">
    <property type="entry name" value="Ribosomal_Su5_D2-typ_SF"/>
</dbReference>
<dbReference type="InterPro" id="IPR014721">
    <property type="entry name" value="Ribsml_uS5_D2-typ_fold_subgr"/>
</dbReference>
<dbReference type="InterPro" id="IPR005225">
    <property type="entry name" value="Small_GTP-bd"/>
</dbReference>
<dbReference type="InterPro" id="IPR000795">
    <property type="entry name" value="T_Tr_GTP-bd_dom"/>
</dbReference>
<dbReference type="InterPro" id="IPR009000">
    <property type="entry name" value="Transl_B-barrel_sf"/>
</dbReference>
<dbReference type="InterPro" id="IPR004540">
    <property type="entry name" value="Transl_elong_EFG/EF2"/>
</dbReference>
<dbReference type="InterPro" id="IPR005517">
    <property type="entry name" value="Transl_elong_EFG/EF2_IV"/>
</dbReference>
<dbReference type="NCBIfam" id="TIGR00484">
    <property type="entry name" value="EF-G"/>
    <property type="match status" value="1"/>
</dbReference>
<dbReference type="NCBIfam" id="NF009379">
    <property type="entry name" value="PRK12740.1-3"/>
    <property type="match status" value="1"/>
</dbReference>
<dbReference type="NCBIfam" id="NF009381">
    <property type="entry name" value="PRK12740.1-5"/>
    <property type="match status" value="1"/>
</dbReference>
<dbReference type="NCBIfam" id="TIGR00231">
    <property type="entry name" value="small_GTP"/>
    <property type="match status" value="1"/>
</dbReference>
<dbReference type="PANTHER" id="PTHR43261:SF1">
    <property type="entry name" value="RIBOSOME-RELEASING FACTOR 2, MITOCHONDRIAL"/>
    <property type="match status" value="1"/>
</dbReference>
<dbReference type="PANTHER" id="PTHR43261">
    <property type="entry name" value="TRANSLATION ELONGATION FACTOR G-RELATED"/>
    <property type="match status" value="1"/>
</dbReference>
<dbReference type="Pfam" id="PF00679">
    <property type="entry name" value="EFG_C"/>
    <property type="match status" value="1"/>
</dbReference>
<dbReference type="Pfam" id="PF14492">
    <property type="entry name" value="EFG_III"/>
    <property type="match status" value="1"/>
</dbReference>
<dbReference type="Pfam" id="PF03764">
    <property type="entry name" value="EFG_IV"/>
    <property type="match status" value="1"/>
</dbReference>
<dbReference type="Pfam" id="PF00009">
    <property type="entry name" value="GTP_EFTU"/>
    <property type="match status" value="1"/>
</dbReference>
<dbReference type="Pfam" id="PF03144">
    <property type="entry name" value="GTP_EFTU_D2"/>
    <property type="match status" value="1"/>
</dbReference>
<dbReference type="PRINTS" id="PR00315">
    <property type="entry name" value="ELONGATNFCT"/>
</dbReference>
<dbReference type="SMART" id="SM00838">
    <property type="entry name" value="EFG_C"/>
    <property type="match status" value="1"/>
</dbReference>
<dbReference type="SMART" id="SM00889">
    <property type="entry name" value="EFG_IV"/>
    <property type="match status" value="1"/>
</dbReference>
<dbReference type="SUPFAM" id="SSF54980">
    <property type="entry name" value="EF-G C-terminal domain-like"/>
    <property type="match status" value="2"/>
</dbReference>
<dbReference type="SUPFAM" id="SSF52540">
    <property type="entry name" value="P-loop containing nucleoside triphosphate hydrolases"/>
    <property type="match status" value="1"/>
</dbReference>
<dbReference type="SUPFAM" id="SSF54211">
    <property type="entry name" value="Ribosomal protein S5 domain 2-like"/>
    <property type="match status" value="1"/>
</dbReference>
<dbReference type="SUPFAM" id="SSF50447">
    <property type="entry name" value="Translation proteins"/>
    <property type="match status" value="1"/>
</dbReference>
<dbReference type="PROSITE" id="PS00301">
    <property type="entry name" value="G_TR_1"/>
    <property type="match status" value="1"/>
</dbReference>
<dbReference type="PROSITE" id="PS51722">
    <property type="entry name" value="G_TR_2"/>
    <property type="match status" value="1"/>
</dbReference>
<proteinExistence type="inferred from homology"/>
<organism>
    <name type="scientific">Synechococcus sp. (strain WH7803)</name>
    <dbReference type="NCBI Taxonomy" id="32051"/>
    <lineage>
        <taxon>Bacteria</taxon>
        <taxon>Bacillati</taxon>
        <taxon>Cyanobacteriota</taxon>
        <taxon>Cyanophyceae</taxon>
        <taxon>Synechococcales</taxon>
        <taxon>Synechococcaceae</taxon>
        <taxon>Synechococcus</taxon>
    </lineage>
</organism>
<comment type="function">
    <text evidence="1">Catalyzes the GTP-dependent ribosomal translocation step during translation elongation. During this step, the ribosome changes from the pre-translocational (PRE) to the post-translocational (POST) state as the newly formed A-site-bound peptidyl-tRNA and P-site-bound deacylated tRNA move to the P and E sites, respectively. Catalyzes the coordinated movement of the two tRNA molecules, the mRNA and conformational changes in the ribosome.</text>
</comment>
<comment type="subcellular location">
    <subcellularLocation>
        <location evidence="1">Cytoplasm</location>
    </subcellularLocation>
</comment>
<comment type="similarity">
    <text evidence="1">Belongs to the TRAFAC class translation factor GTPase superfamily. Classic translation factor GTPase family. EF-G/EF-2 subfamily.</text>
</comment>
<protein>
    <recommendedName>
        <fullName evidence="1">Elongation factor G</fullName>
        <shortName evidence="1">EF-G</shortName>
    </recommendedName>
</protein>
<keyword id="KW-0963">Cytoplasm</keyword>
<keyword id="KW-0251">Elongation factor</keyword>
<keyword id="KW-0342">GTP-binding</keyword>
<keyword id="KW-0547">Nucleotide-binding</keyword>
<keyword id="KW-0648">Protein biosynthesis</keyword>
<keyword id="KW-1185">Reference proteome</keyword>
<accession>A5GIP1</accession>
<reference key="1">
    <citation type="submission" date="2006-05" db="EMBL/GenBank/DDBJ databases">
        <authorList>
            <consortium name="Genoscope"/>
        </authorList>
    </citation>
    <scope>NUCLEOTIDE SEQUENCE [LARGE SCALE GENOMIC DNA]</scope>
    <source>
        <strain>WH7803</strain>
    </source>
</reference>
<name>EFG_SYNPW</name>
<sequence>MARAFPLERVRNIGIAAHIDAGKTTTTERILFYSGVVHKIGEVHDGAAVTDWMAQERERGITITAAAISTSWNDHRINIIDTPGHVDFTIEVERSMRVLDGVIAVFCAVGGVQPQSETVWRQADRYSVPRMVFVNKMDRTGADFLKVHGQIKDRLKANAAPIQLPIGAEGDLSGIIDLVENKAHIYKDDLGQNIEVTDVPDDMKDQVAEWRTYLMEAVAETDEALIEKFLETGELSVEELKAGIRKGVLKHGLVPVLCGSAFKNKGVQLVLDAVVDYLPAPIDVPPIQGVLPNGEEAVRPSDDKAPFSALAFKVMADPYGKLTFVRMYSGVLAKGSYVLNSTKDSKERISRLVVLKADDREEVDELRAGDLGAVLGLKATTTGDTLCSAEDPIVLETLFVPEPVISVAVEPKTKGDMEKLSKALVALAEEDPTFRVNTDQETGQTVIAGMGELHLEILVDRMLREFKVEANIGAPQVSYRETIRASSRGEGKFSRQTGGKGQYGHVVIEMEPGEPESGFEFINKIVGGVVPKEYIKPSEMGMKETCESGVIAGYPLIDVKVTMIDGSYHDVDSSEMAFKIAGSMAFKDAVKKCNPVLLEPMMKVEVEVPEDFLGSIIGDLSSRRGQVEGQAIDDGTSKVSAKVPLAEMFGYATELRSMTQGRGIFSMEFSHYEDVPRNVAEAIISKNQGNS</sequence>